<protein>
    <recommendedName>
        <fullName evidence="1">Threonine--tRNA ligase</fullName>
        <ecNumber evidence="1">6.1.1.3</ecNumber>
    </recommendedName>
    <alternativeName>
        <fullName evidence="1">Threonyl-tRNA synthetase</fullName>
        <shortName evidence="1">ThrRS</shortName>
    </alternativeName>
</protein>
<gene>
    <name evidence="1" type="primary">thrS</name>
    <name type="ordered locus">BL0724</name>
</gene>
<accession>Q8G6C2</accession>
<comment type="function">
    <text evidence="1">Catalyzes the attachment of threonine to tRNA(Thr) in a two-step reaction: L-threonine is first activated by ATP to form Thr-AMP and then transferred to the acceptor end of tRNA(Thr). Also edits incorrectly charged L-seryl-tRNA(Thr).</text>
</comment>
<comment type="catalytic activity">
    <reaction evidence="1">
        <text>tRNA(Thr) + L-threonine + ATP = L-threonyl-tRNA(Thr) + AMP + diphosphate + H(+)</text>
        <dbReference type="Rhea" id="RHEA:24624"/>
        <dbReference type="Rhea" id="RHEA-COMP:9670"/>
        <dbReference type="Rhea" id="RHEA-COMP:9704"/>
        <dbReference type="ChEBI" id="CHEBI:15378"/>
        <dbReference type="ChEBI" id="CHEBI:30616"/>
        <dbReference type="ChEBI" id="CHEBI:33019"/>
        <dbReference type="ChEBI" id="CHEBI:57926"/>
        <dbReference type="ChEBI" id="CHEBI:78442"/>
        <dbReference type="ChEBI" id="CHEBI:78534"/>
        <dbReference type="ChEBI" id="CHEBI:456215"/>
        <dbReference type="EC" id="6.1.1.3"/>
    </reaction>
</comment>
<comment type="cofactor">
    <cofactor evidence="1">
        <name>Zn(2+)</name>
        <dbReference type="ChEBI" id="CHEBI:29105"/>
    </cofactor>
    <text evidence="1">Binds 1 zinc ion per subunit.</text>
</comment>
<comment type="subunit">
    <text evidence="1">Homodimer.</text>
</comment>
<comment type="subcellular location">
    <subcellularLocation>
        <location evidence="1">Cytoplasm</location>
    </subcellularLocation>
</comment>
<comment type="similarity">
    <text evidence="1">Belongs to the class-II aminoacyl-tRNA synthetase family.</text>
</comment>
<keyword id="KW-0030">Aminoacyl-tRNA synthetase</keyword>
<keyword id="KW-0067">ATP-binding</keyword>
<keyword id="KW-0963">Cytoplasm</keyword>
<keyword id="KW-0436">Ligase</keyword>
<keyword id="KW-0479">Metal-binding</keyword>
<keyword id="KW-0547">Nucleotide-binding</keyword>
<keyword id="KW-0648">Protein biosynthesis</keyword>
<keyword id="KW-1185">Reference proteome</keyword>
<keyword id="KW-0694">RNA-binding</keyword>
<keyword id="KW-0820">tRNA-binding</keyword>
<keyword id="KW-0862">Zinc</keyword>
<reference key="1">
    <citation type="journal article" date="2002" name="Proc. Natl. Acad. Sci. U.S.A.">
        <title>The genome sequence of Bifidobacterium longum reflects its adaptation to the human gastrointestinal tract.</title>
        <authorList>
            <person name="Schell M.A."/>
            <person name="Karmirantzou M."/>
            <person name="Snel B."/>
            <person name="Vilanova D."/>
            <person name="Berger B."/>
            <person name="Pessi G."/>
            <person name="Zwahlen M.-C."/>
            <person name="Desiere F."/>
            <person name="Bork P."/>
            <person name="Delley M."/>
            <person name="Pridmore R.D."/>
            <person name="Arigoni F."/>
        </authorList>
    </citation>
    <scope>NUCLEOTIDE SEQUENCE [LARGE SCALE GENOMIC DNA]</scope>
    <source>
        <strain>NCC 2705</strain>
    </source>
</reference>
<proteinExistence type="inferred from homology"/>
<name>SYT_BIFLO</name>
<dbReference type="EC" id="6.1.1.3" evidence="1"/>
<dbReference type="EMBL" id="AE014295">
    <property type="protein sequence ID" value="AAN24541.1"/>
    <property type="molecule type" value="Genomic_DNA"/>
</dbReference>
<dbReference type="RefSeq" id="NP_695905.1">
    <property type="nucleotide sequence ID" value="NC_004307.2"/>
</dbReference>
<dbReference type="RefSeq" id="WP_007054284.1">
    <property type="nucleotide sequence ID" value="NC_004307.2"/>
</dbReference>
<dbReference type="SMR" id="Q8G6C2"/>
<dbReference type="STRING" id="206672.BL0724"/>
<dbReference type="EnsemblBacteria" id="AAN24541">
    <property type="protein sequence ID" value="AAN24541"/>
    <property type="gene ID" value="BL0724"/>
</dbReference>
<dbReference type="KEGG" id="blo:BL0724"/>
<dbReference type="PATRIC" id="fig|206672.9.peg.421"/>
<dbReference type="HOGENOM" id="CLU_008554_0_1_11"/>
<dbReference type="OrthoDB" id="9802304at2"/>
<dbReference type="PhylomeDB" id="Q8G6C2"/>
<dbReference type="Proteomes" id="UP000000439">
    <property type="component" value="Chromosome"/>
</dbReference>
<dbReference type="GO" id="GO:0005737">
    <property type="term" value="C:cytoplasm"/>
    <property type="evidence" value="ECO:0007669"/>
    <property type="project" value="UniProtKB-SubCell"/>
</dbReference>
<dbReference type="GO" id="GO:0005524">
    <property type="term" value="F:ATP binding"/>
    <property type="evidence" value="ECO:0007669"/>
    <property type="project" value="UniProtKB-UniRule"/>
</dbReference>
<dbReference type="GO" id="GO:0046872">
    <property type="term" value="F:metal ion binding"/>
    <property type="evidence" value="ECO:0007669"/>
    <property type="project" value="UniProtKB-KW"/>
</dbReference>
<dbReference type="GO" id="GO:0004829">
    <property type="term" value="F:threonine-tRNA ligase activity"/>
    <property type="evidence" value="ECO:0007669"/>
    <property type="project" value="UniProtKB-UniRule"/>
</dbReference>
<dbReference type="GO" id="GO:0000049">
    <property type="term" value="F:tRNA binding"/>
    <property type="evidence" value="ECO:0007669"/>
    <property type="project" value="UniProtKB-KW"/>
</dbReference>
<dbReference type="GO" id="GO:0006435">
    <property type="term" value="P:threonyl-tRNA aminoacylation"/>
    <property type="evidence" value="ECO:0007669"/>
    <property type="project" value="UniProtKB-UniRule"/>
</dbReference>
<dbReference type="CDD" id="cd01667">
    <property type="entry name" value="TGS_ThrRS"/>
    <property type="match status" value="1"/>
</dbReference>
<dbReference type="CDD" id="cd00860">
    <property type="entry name" value="ThrRS_anticodon"/>
    <property type="match status" value="1"/>
</dbReference>
<dbReference type="CDD" id="cd00771">
    <property type="entry name" value="ThrRS_core"/>
    <property type="match status" value="1"/>
</dbReference>
<dbReference type="FunFam" id="3.30.930.10:FF:000019">
    <property type="entry name" value="Threonine--tRNA ligase"/>
    <property type="match status" value="1"/>
</dbReference>
<dbReference type="FunFam" id="3.30.980.10:FF:000005">
    <property type="entry name" value="Threonyl-tRNA synthetase, mitochondrial"/>
    <property type="match status" value="1"/>
</dbReference>
<dbReference type="Gene3D" id="3.30.54.20">
    <property type="match status" value="1"/>
</dbReference>
<dbReference type="Gene3D" id="3.40.50.800">
    <property type="entry name" value="Anticodon-binding domain"/>
    <property type="match status" value="1"/>
</dbReference>
<dbReference type="Gene3D" id="3.30.930.10">
    <property type="entry name" value="Bira Bifunctional Protein, Domain 2"/>
    <property type="match status" value="1"/>
</dbReference>
<dbReference type="Gene3D" id="3.30.980.10">
    <property type="entry name" value="Threonyl-trna Synthetase, Chain A, domain 2"/>
    <property type="match status" value="1"/>
</dbReference>
<dbReference type="HAMAP" id="MF_00184">
    <property type="entry name" value="Thr_tRNA_synth"/>
    <property type="match status" value="1"/>
</dbReference>
<dbReference type="InterPro" id="IPR002314">
    <property type="entry name" value="aa-tRNA-synt_IIb"/>
</dbReference>
<dbReference type="InterPro" id="IPR006195">
    <property type="entry name" value="aa-tRNA-synth_II"/>
</dbReference>
<dbReference type="InterPro" id="IPR045864">
    <property type="entry name" value="aa-tRNA-synth_II/BPL/LPL"/>
</dbReference>
<dbReference type="InterPro" id="IPR004154">
    <property type="entry name" value="Anticodon-bd"/>
</dbReference>
<dbReference type="InterPro" id="IPR036621">
    <property type="entry name" value="Anticodon-bd_dom_sf"/>
</dbReference>
<dbReference type="InterPro" id="IPR004095">
    <property type="entry name" value="TGS"/>
</dbReference>
<dbReference type="InterPro" id="IPR002320">
    <property type="entry name" value="Thr-tRNA-ligase_IIa"/>
</dbReference>
<dbReference type="InterPro" id="IPR018163">
    <property type="entry name" value="Thr/Ala-tRNA-synth_IIc_edit"/>
</dbReference>
<dbReference type="InterPro" id="IPR047246">
    <property type="entry name" value="ThrRS_anticodon"/>
</dbReference>
<dbReference type="InterPro" id="IPR033728">
    <property type="entry name" value="ThrRS_core"/>
</dbReference>
<dbReference type="InterPro" id="IPR012947">
    <property type="entry name" value="tRNA_SAD"/>
</dbReference>
<dbReference type="NCBIfam" id="TIGR00418">
    <property type="entry name" value="thrS"/>
    <property type="match status" value="1"/>
</dbReference>
<dbReference type="PANTHER" id="PTHR11451:SF44">
    <property type="entry name" value="THREONINE--TRNA LIGASE, CHLOROPLASTIC_MITOCHONDRIAL 2"/>
    <property type="match status" value="1"/>
</dbReference>
<dbReference type="PANTHER" id="PTHR11451">
    <property type="entry name" value="THREONINE-TRNA LIGASE"/>
    <property type="match status" value="1"/>
</dbReference>
<dbReference type="Pfam" id="PF03129">
    <property type="entry name" value="HGTP_anticodon"/>
    <property type="match status" value="1"/>
</dbReference>
<dbReference type="Pfam" id="PF00587">
    <property type="entry name" value="tRNA-synt_2b"/>
    <property type="match status" value="1"/>
</dbReference>
<dbReference type="Pfam" id="PF07973">
    <property type="entry name" value="tRNA_SAD"/>
    <property type="match status" value="1"/>
</dbReference>
<dbReference type="PRINTS" id="PR01047">
    <property type="entry name" value="TRNASYNTHTHR"/>
</dbReference>
<dbReference type="SMART" id="SM00863">
    <property type="entry name" value="tRNA_SAD"/>
    <property type="match status" value="1"/>
</dbReference>
<dbReference type="SUPFAM" id="SSF52954">
    <property type="entry name" value="Class II aaRS ABD-related"/>
    <property type="match status" value="1"/>
</dbReference>
<dbReference type="SUPFAM" id="SSF55681">
    <property type="entry name" value="Class II aaRS and biotin synthetases"/>
    <property type="match status" value="1"/>
</dbReference>
<dbReference type="SUPFAM" id="SSF55186">
    <property type="entry name" value="ThrRS/AlaRS common domain"/>
    <property type="match status" value="1"/>
</dbReference>
<dbReference type="PROSITE" id="PS50862">
    <property type="entry name" value="AA_TRNA_LIGASE_II"/>
    <property type="match status" value="1"/>
</dbReference>
<dbReference type="PROSITE" id="PS51880">
    <property type="entry name" value="TGS"/>
    <property type="match status" value="1"/>
</dbReference>
<organism>
    <name type="scientific">Bifidobacterium longum (strain NCC 2705)</name>
    <dbReference type="NCBI Taxonomy" id="206672"/>
    <lineage>
        <taxon>Bacteria</taxon>
        <taxon>Bacillati</taxon>
        <taxon>Actinomycetota</taxon>
        <taxon>Actinomycetes</taxon>
        <taxon>Bifidobacteriales</taxon>
        <taxon>Bifidobacteriaceae</taxon>
        <taxon>Bifidobacterium</taxon>
    </lineage>
</organism>
<sequence>MAQATISITVNGEAKEVEATTTGVELFAEDKNIIAVKINGENRDLYTPLNDGDTVDPIALDSEDGLAIMRHSATHVMAQAVQEVYPNAKLGVGPVIKDGFYYDFQVDQPFTPNDLKDIEKRMQRIIKSSQSFRRRSVTEEEALKEEADQPFKIELIEDKEAHLDPAAATEISEKELSFYDNVDRDGNVVWKDLCRGPHLPNTRYIKAFKIERSAAAYWRGSEKNPTMQRVYGTAWATKEDLKAYQTRLEEAAKRDHRKLGAEMDLFSFPDEIGPGLAVFHPKGAAVINAMEDYSREMHRKHHYSFVQTPHITKGGLYETSGHLHWYKDGMYPPMHLDEEKDADGNITKPGADYYLKPMNCPMHNLIFKSRQRSYRELPLRLFEFGTVYRYEKSGEVHGLTRVRGLTQDDSHIYCTREQMKDELTSLLTFVLNLLKDFGLTDFYLELSTKDPNKYVGSDEIWEEATNTLAEVAKESNLELVDDPCGAAFYGPKISVQARDAIGRTWQVSTIQLDFNLPERFQLEYIAKDGTHQRPVMIHRALFGSIERFFAVLLEHYAGAFPAWLAPVQVLGVPVADEFAPHLAGFVKSLEDEMVRCEIDYSDDRFGKKIRNASKSKVPFILIVGEEDMNNNAVSFRFRDGSQLNGVPVDTAREQILTVIKKRVQVNSADDFNAAVAE</sequence>
<feature type="chain" id="PRO_0000100944" description="Threonine--tRNA ligase">
    <location>
        <begin position="1"/>
        <end position="677"/>
    </location>
</feature>
<feature type="domain" description="TGS" evidence="2">
    <location>
        <begin position="1"/>
        <end position="59"/>
    </location>
</feature>
<feature type="region of interest" description="Catalytic" evidence="1">
    <location>
        <begin position="255"/>
        <end position="561"/>
    </location>
</feature>
<feature type="binding site" evidence="1">
    <location>
        <position position="360"/>
    </location>
    <ligand>
        <name>Zn(2+)</name>
        <dbReference type="ChEBI" id="CHEBI:29105"/>
    </ligand>
</feature>
<feature type="binding site" evidence="1">
    <location>
        <position position="411"/>
    </location>
    <ligand>
        <name>Zn(2+)</name>
        <dbReference type="ChEBI" id="CHEBI:29105"/>
    </ligand>
</feature>
<feature type="binding site" evidence="1">
    <location>
        <position position="538"/>
    </location>
    <ligand>
        <name>Zn(2+)</name>
        <dbReference type="ChEBI" id="CHEBI:29105"/>
    </ligand>
</feature>
<evidence type="ECO:0000255" key="1">
    <source>
        <dbReference type="HAMAP-Rule" id="MF_00184"/>
    </source>
</evidence>
<evidence type="ECO:0000255" key="2">
    <source>
        <dbReference type="PROSITE-ProRule" id="PRU01228"/>
    </source>
</evidence>